<reference key="1">
    <citation type="submission" date="1997-08" db="EMBL/GenBank/DDBJ databases">
        <title>Bacillus subtilis chromosomal region downstream nprE.</title>
        <authorList>
            <person name="Bertero M."/>
            <person name="Presecan E."/>
            <person name="Glaser P."/>
            <person name="Richou A."/>
            <person name="Danchin A."/>
        </authorList>
    </citation>
    <scope>NUCLEOTIDE SEQUENCE [GENOMIC DNA]</scope>
    <source>
        <strain>168</strain>
    </source>
</reference>
<reference key="2">
    <citation type="journal article" date="1997" name="Nature">
        <title>The complete genome sequence of the Gram-positive bacterium Bacillus subtilis.</title>
        <authorList>
            <person name="Kunst F."/>
            <person name="Ogasawara N."/>
            <person name="Moszer I."/>
            <person name="Albertini A.M."/>
            <person name="Alloni G."/>
            <person name="Azevedo V."/>
            <person name="Bertero M.G."/>
            <person name="Bessieres P."/>
            <person name="Bolotin A."/>
            <person name="Borchert S."/>
            <person name="Borriss R."/>
            <person name="Boursier L."/>
            <person name="Brans A."/>
            <person name="Braun M."/>
            <person name="Brignell S.C."/>
            <person name="Bron S."/>
            <person name="Brouillet S."/>
            <person name="Bruschi C.V."/>
            <person name="Caldwell B."/>
            <person name="Capuano V."/>
            <person name="Carter N.M."/>
            <person name="Choi S.-K."/>
            <person name="Codani J.-J."/>
            <person name="Connerton I.F."/>
            <person name="Cummings N.J."/>
            <person name="Daniel R.A."/>
            <person name="Denizot F."/>
            <person name="Devine K.M."/>
            <person name="Duesterhoeft A."/>
            <person name="Ehrlich S.D."/>
            <person name="Emmerson P.T."/>
            <person name="Entian K.-D."/>
            <person name="Errington J."/>
            <person name="Fabret C."/>
            <person name="Ferrari E."/>
            <person name="Foulger D."/>
            <person name="Fritz C."/>
            <person name="Fujita M."/>
            <person name="Fujita Y."/>
            <person name="Fuma S."/>
            <person name="Galizzi A."/>
            <person name="Galleron N."/>
            <person name="Ghim S.-Y."/>
            <person name="Glaser P."/>
            <person name="Goffeau A."/>
            <person name="Golightly E.J."/>
            <person name="Grandi G."/>
            <person name="Guiseppi G."/>
            <person name="Guy B.J."/>
            <person name="Haga K."/>
            <person name="Haiech J."/>
            <person name="Harwood C.R."/>
            <person name="Henaut A."/>
            <person name="Hilbert H."/>
            <person name="Holsappel S."/>
            <person name="Hosono S."/>
            <person name="Hullo M.-F."/>
            <person name="Itaya M."/>
            <person name="Jones L.-M."/>
            <person name="Joris B."/>
            <person name="Karamata D."/>
            <person name="Kasahara Y."/>
            <person name="Klaerr-Blanchard M."/>
            <person name="Klein C."/>
            <person name="Kobayashi Y."/>
            <person name="Koetter P."/>
            <person name="Koningstein G."/>
            <person name="Krogh S."/>
            <person name="Kumano M."/>
            <person name="Kurita K."/>
            <person name="Lapidus A."/>
            <person name="Lardinois S."/>
            <person name="Lauber J."/>
            <person name="Lazarevic V."/>
            <person name="Lee S.-M."/>
            <person name="Levine A."/>
            <person name="Liu H."/>
            <person name="Masuda S."/>
            <person name="Mauel C."/>
            <person name="Medigue C."/>
            <person name="Medina N."/>
            <person name="Mellado R.P."/>
            <person name="Mizuno M."/>
            <person name="Moestl D."/>
            <person name="Nakai S."/>
            <person name="Noback M."/>
            <person name="Noone D."/>
            <person name="O'Reilly M."/>
            <person name="Ogawa K."/>
            <person name="Ogiwara A."/>
            <person name="Oudega B."/>
            <person name="Park S.-H."/>
            <person name="Parro V."/>
            <person name="Pohl T.M."/>
            <person name="Portetelle D."/>
            <person name="Porwollik S."/>
            <person name="Prescott A.M."/>
            <person name="Presecan E."/>
            <person name="Pujic P."/>
            <person name="Purnelle B."/>
            <person name="Rapoport G."/>
            <person name="Rey M."/>
            <person name="Reynolds S."/>
            <person name="Rieger M."/>
            <person name="Rivolta C."/>
            <person name="Rocha E."/>
            <person name="Roche B."/>
            <person name="Rose M."/>
            <person name="Sadaie Y."/>
            <person name="Sato T."/>
            <person name="Scanlan E."/>
            <person name="Schleich S."/>
            <person name="Schroeter R."/>
            <person name="Scoffone F."/>
            <person name="Sekiguchi J."/>
            <person name="Sekowska A."/>
            <person name="Seror S.J."/>
            <person name="Serror P."/>
            <person name="Shin B.-S."/>
            <person name="Soldo B."/>
            <person name="Sorokin A."/>
            <person name="Tacconi E."/>
            <person name="Takagi T."/>
            <person name="Takahashi H."/>
            <person name="Takemaru K."/>
            <person name="Takeuchi M."/>
            <person name="Tamakoshi A."/>
            <person name="Tanaka T."/>
            <person name="Terpstra P."/>
            <person name="Tognoni A."/>
            <person name="Tosato V."/>
            <person name="Uchiyama S."/>
            <person name="Vandenbol M."/>
            <person name="Vannier F."/>
            <person name="Vassarotti A."/>
            <person name="Viari A."/>
            <person name="Wambutt R."/>
            <person name="Wedler E."/>
            <person name="Wedler H."/>
            <person name="Weitzenegger T."/>
            <person name="Winters P."/>
            <person name="Wipat A."/>
            <person name="Yamamoto H."/>
            <person name="Yamane K."/>
            <person name="Yasumoto K."/>
            <person name="Yata K."/>
            <person name="Yoshida K."/>
            <person name="Yoshikawa H.-F."/>
            <person name="Zumstein E."/>
            <person name="Yoshikawa H."/>
            <person name="Danchin A."/>
        </authorList>
    </citation>
    <scope>NUCLEOTIDE SEQUENCE [LARGE SCALE GENOMIC DNA]</scope>
    <source>
        <strain>168</strain>
    </source>
</reference>
<reference evidence="3" key="3">
    <citation type="submission" date="2008-09" db="PDB data bank">
        <title>Crystal structure of probable 2-dehydropantoate 2-reductase panE from Bacillus subtilis.</title>
        <authorList>
            <person name="Ramagopal U.A."/>
            <person name="Toro R."/>
            <person name="Gilmore M."/>
            <person name="Hu S."/>
            <person name="Maletic M."/>
            <person name="Gheyi T."/>
            <person name="Burley S.K."/>
            <person name="Almo S.C."/>
        </authorList>
    </citation>
    <scope>X-RAY CRYSTALLOGRAPHY (1.90 ANGSTROMS) OF 2-297</scope>
</reference>
<organism>
    <name type="scientific">Bacillus subtilis (strain 168)</name>
    <dbReference type="NCBI Taxonomy" id="224308"/>
    <lineage>
        <taxon>Bacteria</taxon>
        <taxon>Bacillati</taxon>
        <taxon>Bacillota</taxon>
        <taxon>Bacilli</taxon>
        <taxon>Bacillales</taxon>
        <taxon>Bacillaceae</taxon>
        <taxon>Bacillus</taxon>
    </lineage>
</organism>
<name>PANE_BACSU</name>
<comment type="function">
    <text evidence="1">Catalyzes the NADPH-dependent reduction of ketopantoate into pantoic acid.</text>
</comment>
<comment type="catalytic activity">
    <reaction evidence="1">
        <text>(R)-pantoate + NADP(+) = 2-dehydropantoate + NADPH + H(+)</text>
        <dbReference type="Rhea" id="RHEA:16233"/>
        <dbReference type="ChEBI" id="CHEBI:11561"/>
        <dbReference type="ChEBI" id="CHEBI:15378"/>
        <dbReference type="ChEBI" id="CHEBI:15980"/>
        <dbReference type="ChEBI" id="CHEBI:57783"/>
        <dbReference type="ChEBI" id="CHEBI:58349"/>
        <dbReference type="EC" id="1.1.1.169"/>
    </reaction>
</comment>
<comment type="pathway">
    <text evidence="1">Cofactor biosynthesis; (R)-pantothenate biosynthesis; (R)-pantoate from 3-methyl-2-oxobutanoate: step 2/2.</text>
</comment>
<comment type="subcellular location">
    <subcellularLocation>
        <location evidence="1">Cytoplasm</location>
    </subcellularLocation>
</comment>
<comment type="similarity">
    <text evidence="2">Belongs to the ketopantoate reductase family.</text>
</comment>
<sequence>MKIGIIGGGSVGLLCAYYLSLYHDVTVVTRRQEQAAAIQSEGIRLYKGGEEFRADCSADTSINSDFDLLVVTVKQHQLQSVFSSLERIGKTNILFLQNGMGHIHDLKDWHVGHSIYVGIVEHGAVRKSDTAVDHTGLGAIKWSAFDDAEPDRLNILFQHNHSDFPIYYETDWYRLLTGKLIVNACINPLTALLQVKNGELLTTPAYLAFMKLVFQEACRILKLENEEKAWERVQAVCGQTKENRSSMLVDVIGGRQTEADAIIGYLLKEASLQGLDAVHLEFLYGSIKALERNTNKVF</sequence>
<keyword id="KW-0002">3D-structure</keyword>
<keyword id="KW-0963">Cytoplasm</keyword>
<keyword id="KW-0521">NADP</keyword>
<keyword id="KW-0560">Oxidoreductase</keyword>
<keyword id="KW-0566">Pantothenate biosynthesis</keyword>
<keyword id="KW-1185">Reference proteome</keyword>
<evidence type="ECO:0000250" key="1">
    <source>
        <dbReference type="UniProtKB" id="P0A9J4"/>
    </source>
</evidence>
<evidence type="ECO:0000305" key="2"/>
<evidence type="ECO:0007744" key="3">
    <source>
        <dbReference type="PDB" id="3EGO"/>
    </source>
</evidence>
<evidence type="ECO:0007829" key="4">
    <source>
        <dbReference type="PDB" id="3EGO"/>
    </source>
</evidence>
<feature type="chain" id="PRO_0000157311" description="2-dehydropantoate 2-reductase">
    <location>
        <begin position="1"/>
        <end position="298"/>
    </location>
</feature>
<feature type="active site" description="Proton donor" evidence="1">
    <location>
        <position position="179"/>
    </location>
</feature>
<feature type="binding site" evidence="1">
    <location>
        <begin position="7"/>
        <end position="12"/>
    </location>
    <ligand>
        <name>NADP(+)</name>
        <dbReference type="ChEBI" id="CHEBI:58349"/>
    </ligand>
</feature>
<feature type="binding site" evidence="1">
    <location>
        <position position="98"/>
    </location>
    <ligand>
        <name>NADP(+)</name>
        <dbReference type="ChEBI" id="CHEBI:58349"/>
    </ligand>
</feature>
<feature type="binding site" evidence="1">
    <location>
        <position position="98"/>
    </location>
    <ligand>
        <name>substrate</name>
    </ligand>
</feature>
<feature type="binding site" evidence="1">
    <location>
        <position position="124"/>
    </location>
    <ligand>
        <name>NADP(+)</name>
        <dbReference type="ChEBI" id="CHEBI:58349"/>
    </ligand>
</feature>
<feature type="binding site" evidence="1">
    <location>
        <position position="183"/>
    </location>
    <ligand>
        <name>substrate</name>
    </ligand>
</feature>
<feature type="binding site" evidence="1">
    <location>
        <position position="187"/>
    </location>
    <ligand>
        <name>substrate</name>
    </ligand>
</feature>
<feature type="binding site" evidence="1">
    <location>
        <position position="197"/>
    </location>
    <ligand>
        <name>substrate</name>
    </ligand>
</feature>
<feature type="binding site" evidence="1">
    <location>
        <position position="246"/>
    </location>
    <ligand>
        <name>substrate</name>
    </ligand>
</feature>
<feature type="binding site" evidence="1">
    <location>
        <position position="258"/>
    </location>
    <ligand>
        <name>NADP(+)</name>
        <dbReference type="ChEBI" id="CHEBI:58349"/>
    </ligand>
</feature>
<feature type="strand" evidence="4">
    <location>
        <begin position="2"/>
        <end position="6"/>
    </location>
</feature>
<feature type="helix" evidence="4">
    <location>
        <begin position="10"/>
        <end position="20"/>
    </location>
</feature>
<feature type="strand" evidence="4">
    <location>
        <begin position="23"/>
        <end position="28"/>
    </location>
</feature>
<feature type="helix" evidence="4">
    <location>
        <begin position="32"/>
        <end position="41"/>
    </location>
</feature>
<feature type="strand" evidence="4">
    <location>
        <begin position="43"/>
        <end position="47"/>
    </location>
</feature>
<feature type="strand" evidence="4">
    <location>
        <begin position="50"/>
        <end position="54"/>
    </location>
</feature>
<feature type="strand" evidence="4">
    <location>
        <begin position="57"/>
        <end position="61"/>
    </location>
</feature>
<feature type="strand" evidence="4">
    <location>
        <begin position="67"/>
        <end position="71"/>
    </location>
</feature>
<feature type="helix" evidence="4">
    <location>
        <begin position="75"/>
        <end position="77"/>
    </location>
</feature>
<feature type="helix" evidence="4">
    <location>
        <begin position="78"/>
        <end position="84"/>
    </location>
</feature>
<feature type="strand" evidence="4">
    <location>
        <begin position="92"/>
        <end position="95"/>
    </location>
</feature>
<feature type="strand" evidence="4">
    <location>
        <begin position="98"/>
        <end position="100"/>
    </location>
</feature>
<feature type="helix" evidence="4">
    <location>
        <begin position="101"/>
        <end position="107"/>
    </location>
</feature>
<feature type="strand" evidence="4">
    <location>
        <begin position="114"/>
        <end position="120"/>
    </location>
</feature>
<feature type="strand" evidence="4">
    <location>
        <begin position="123"/>
        <end position="126"/>
    </location>
</feature>
<feature type="strand" evidence="4">
    <location>
        <begin position="128"/>
        <end position="136"/>
    </location>
</feature>
<feature type="strand" evidence="4">
    <location>
        <begin position="140"/>
        <end position="144"/>
    </location>
</feature>
<feature type="helix" evidence="4">
    <location>
        <begin position="150"/>
        <end position="153"/>
    </location>
</feature>
<feature type="turn" evidence="4">
    <location>
        <begin position="154"/>
        <end position="157"/>
    </location>
</feature>
<feature type="strand" evidence="4">
    <location>
        <begin position="166"/>
        <end position="168"/>
    </location>
</feature>
<feature type="helix" evidence="4">
    <location>
        <begin position="172"/>
        <end position="193"/>
    </location>
</feature>
<feature type="helix" evidence="4">
    <location>
        <begin position="199"/>
        <end position="202"/>
    </location>
</feature>
<feature type="helix" evidence="4">
    <location>
        <begin position="204"/>
        <end position="221"/>
    </location>
</feature>
<feature type="helix" evidence="4">
    <location>
        <begin position="226"/>
        <end position="239"/>
    </location>
</feature>
<feature type="turn" evidence="4">
    <location>
        <begin position="240"/>
        <end position="242"/>
    </location>
</feature>
<feature type="helix" evidence="4">
    <location>
        <begin position="246"/>
        <end position="253"/>
    </location>
</feature>
<feature type="helix" evidence="4">
    <location>
        <begin position="259"/>
        <end position="272"/>
    </location>
</feature>
<feature type="helix" evidence="4">
    <location>
        <begin position="278"/>
        <end position="289"/>
    </location>
</feature>
<proteinExistence type="evidence at protein level"/>
<dbReference type="EC" id="1.1.1.169" evidence="1"/>
<dbReference type="EMBL" id="Z98682">
    <property type="protein sequence ID" value="CAB11364.1"/>
    <property type="molecule type" value="Genomic_DNA"/>
</dbReference>
<dbReference type="EMBL" id="AL009126">
    <property type="protein sequence ID" value="CAB13384.1"/>
    <property type="molecule type" value="Genomic_DNA"/>
</dbReference>
<dbReference type="PIR" id="F69875">
    <property type="entry name" value="F69875"/>
</dbReference>
<dbReference type="RefSeq" id="NP_389394.1">
    <property type="nucleotide sequence ID" value="NC_000964.3"/>
</dbReference>
<dbReference type="RefSeq" id="WP_003232206.1">
    <property type="nucleotide sequence ID" value="NZ_OZ025638.1"/>
</dbReference>
<dbReference type="PDB" id="3EGO">
    <property type="method" value="X-ray"/>
    <property type="resolution" value="1.90 A"/>
    <property type="chains" value="A/B=2-297"/>
</dbReference>
<dbReference type="PDBsum" id="3EGO"/>
<dbReference type="SMR" id="O34661"/>
<dbReference type="FunCoup" id="O34661">
    <property type="interactions" value="190"/>
</dbReference>
<dbReference type="STRING" id="224308.BSU15110"/>
<dbReference type="PaxDb" id="224308-BSU15110"/>
<dbReference type="DNASU" id="936782"/>
<dbReference type="EnsemblBacteria" id="CAB13384">
    <property type="protein sequence ID" value="CAB13384"/>
    <property type="gene ID" value="BSU_15110"/>
</dbReference>
<dbReference type="GeneID" id="936782"/>
<dbReference type="KEGG" id="bsu:BSU15110"/>
<dbReference type="PATRIC" id="fig|224308.179.peg.1647"/>
<dbReference type="eggNOG" id="COG1893">
    <property type="taxonomic scope" value="Bacteria"/>
</dbReference>
<dbReference type="InParanoid" id="O34661"/>
<dbReference type="OrthoDB" id="9800163at2"/>
<dbReference type="PhylomeDB" id="O34661"/>
<dbReference type="BioCyc" id="BSUB:BSU15110-MONOMER"/>
<dbReference type="UniPathway" id="UPA00028">
    <property type="reaction ID" value="UER00004"/>
</dbReference>
<dbReference type="EvolutionaryTrace" id="O34661"/>
<dbReference type="Proteomes" id="UP000001570">
    <property type="component" value="Chromosome"/>
</dbReference>
<dbReference type="GO" id="GO:0005737">
    <property type="term" value="C:cytoplasm"/>
    <property type="evidence" value="ECO:0000318"/>
    <property type="project" value="GO_Central"/>
</dbReference>
<dbReference type="GO" id="GO:0008677">
    <property type="term" value="F:2-dehydropantoate 2-reductase activity"/>
    <property type="evidence" value="ECO:0000318"/>
    <property type="project" value="GO_Central"/>
</dbReference>
<dbReference type="GO" id="GO:0050661">
    <property type="term" value="F:NADP binding"/>
    <property type="evidence" value="ECO:0000318"/>
    <property type="project" value="GO_Central"/>
</dbReference>
<dbReference type="GO" id="GO:0015940">
    <property type="term" value="P:pantothenate biosynthetic process"/>
    <property type="evidence" value="ECO:0007669"/>
    <property type="project" value="UniProtKB-UniPathway"/>
</dbReference>
<dbReference type="FunFam" id="1.10.1040.10:FF:000043">
    <property type="entry name" value="2-dehydropantoate 2-reductase"/>
    <property type="match status" value="1"/>
</dbReference>
<dbReference type="Gene3D" id="1.10.1040.10">
    <property type="entry name" value="N-(1-d-carboxylethyl)-l-norvaline Dehydrogenase, domain 2"/>
    <property type="match status" value="1"/>
</dbReference>
<dbReference type="Gene3D" id="3.40.50.720">
    <property type="entry name" value="NAD(P)-binding Rossmann-like Domain"/>
    <property type="match status" value="1"/>
</dbReference>
<dbReference type="InterPro" id="IPR008927">
    <property type="entry name" value="6-PGluconate_DH-like_C_sf"/>
</dbReference>
<dbReference type="InterPro" id="IPR013328">
    <property type="entry name" value="6PGD_dom2"/>
</dbReference>
<dbReference type="InterPro" id="IPR003710">
    <property type="entry name" value="ApbA"/>
</dbReference>
<dbReference type="InterPro" id="IPR050838">
    <property type="entry name" value="Ketopantoate_reductase"/>
</dbReference>
<dbReference type="InterPro" id="IPR013752">
    <property type="entry name" value="KPA_reductase"/>
</dbReference>
<dbReference type="InterPro" id="IPR013332">
    <property type="entry name" value="KPR_N"/>
</dbReference>
<dbReference type="InterPro" id="IPR036291">
    <property type="entry name" value="NAD(P)-bd_dom_sf"/>
</dbReference>
<dbReference type="NCBIfam" id="TIGR00745">
    <property type="entry name" value="apbA_panE"/>
    <property type="match status" value="1"/>
</dbReference>
<dbReference type="NCBIfam" id="NF005093">
    <property type="entry name" value="PRK06522.2-4"/>
    <property type="match status" value="1"/>
</dbReference>
<dbReference type="PANTHER" id="PTHR43765:SF2">
    <property type="entry name" value="2-DEHYDROPANTOATE 2-REDUCTASE"/>
    <property type="match status" value="1"/>
</dbReference>
<dbReference type="PANTHER" id="PTHR43765">
    <property type="entry name" value="2-DEHYDROPANTOATE 2-REDUCTASE-RELATED"/>
    <property type="match status" value="1"/>
</dbReference>
<dbReference type="Pfam" id="PF02558">
    <property type="entry name" value="ApbA"/>
    <property type="match status" value="1"/>
</dbReference>
<dbReference type="Pfam" id="PF08546">
    <property type="entry name" value="ApbA_C"/>
    <property type="match status" value="1"/>
</dbReference>
<dbReference type="SUPFAM" id="SSF48179">
    <property type="entry name" value="6-phosphogluconate dehydrogenase C-terminal domain-like"/>
    <property type="match status" value="1"/>
</dbReference>
<dbReference type="SUPFAM" id="SSF51735">
    <property type="entry name" value="NAD(P)-binding Rossmann-fold domains"/>
    <property type="match status" value="1"/>
</dbReference>
<accession>O34661</accession>
<protein>
    <recommendedName>
        <fullName evidence="1">2-dehydropantoate 2-reductase</fullName>
        <ecNumber evidence="1">1.1.1.169</ecNumber>
    </recommendedName>
    <alternativeName>
        <fullName evidence="1">Ketopantoate reductase</fullName>
        <shortName evidence="1">KPR</shortName>
    </alternativeName>
</protein>
<gene>
    <name type="primary">panE</name>
    <name type="synonym">apbA</name>
    <name type="synonym">ylbQ</name>
    <name type="ordered locus">BSU15110</name>
</gene>